<sequence>MVATIMQTTTTVLTTVAAMSTTLASNYISSQASSSTSVTTVTTIATSIRSTPSNLLFSNVAAQPKSSSASTIGLSIGLPIGIFCFGLLILLCYFYLKRNSVSISNPPMSATIPREEEYCRRTNWFSRLFWQSKCEDQNSYSNRDIEKYNDTQWTSGDNMSSKIQYKISKPIIPQHILTPKKTVKNPYAWSGKNISLDPKVNEMEEEKVVDAFLYTKPPNIVHIESSMPSYNDLPSQKTVSSKKTALKTSEKWSYESPLSRWFLRGSTYFKDYGLSKTSLKTPTGAPQLKQMKMLSRISKGYFNESDIMPDERSPILEYNNTPLDANDSVNNLGNTTPDSQITSYRNNNIDLITARPHSVIYGTTAQQTLETNFNDHHDCNKSTEKHELIIPTPSKPLKKRKKRRQSKMYQHLQHLSRSKPLPLTPNSKYNGEASVQLGKTYTVIQDYEPRLTDEIRISLGEKVKILATHTDGWCLVEKCNTQKGSIHVSVDDKRYLNEDRGIVPGDCLQEYD</sequence>
<feature type="chain" id="PRO_0000087384" description="Nuclear fusion protein FUS1">
    <location>
        <begin position="1"/>
        <end position="512"/>
    </location>
</feature>
<feature type="transmembrane region" description="Helical" evidence="1">
    <location>
        <begin position="72"/>
        <end position="96"/>
    </location>
</feature>
<feature type="domain" description="SH3" evidence="2">
    <location>
        <begin position="436"/>
        <end position="512"/>
    </location>
</feature>
<feature type="region of interest" description="Hydrophilic">
    <location>
        <begin position="97"/>
        <end position="512"/>
    </location>
</feature>
<feature type="modified residue" description="Phosphothreonine" evidence="6">
    <location>
        <position position="178"/>
    </location>
</feature>
<feature type="modified residue" description="Phosphoserine" evidence="6">
    <location>
        <position position="190"/>
    </location>
</feature>
<feature type="modified residue" description="Phosphoserine" evidence="6">
    <location>
        <position position="256"/>
    </location>
</feature>
<feature type="modified residue" description="Phosphothreonine" evidence="6">
    <location>
        <position position="281"/>
    </location>
</feature>
<feature type="modified residue" description="Phosphothreonine" evidence="6">
    <location>
        <position position="424"/>
    </location>
</feature>
<keyword id="KW-0325">Glycoprotein</keyword>
<keyword id="KW-0472">Membrane</keyword>
<keyword id="KW-0597">Phosphoprotein</keyword>
<keyword id="KW-1185">Reference proteome</keyword>
<keyword id="KW-0728">SH3 domain</keyword>
<keyword id="KW-0812">Transmembrane</keyword>
<keyword id="KW-1133">Transmembrane helix</keyword>
<accession>P11710</accession>
<accession>D6VQY8</accession>
<evidence type="ECO:0000255" key="1"/>
<evidence type="ECO:0000255" key="2">
    <source>
        <dbReference type="PROSITE-ProRule" id="PRU00192"/>
    </source>
</evidence>
<evidence type="ECO:0000269" key="3">
    <source>
    </source>
</evidence>
<evidence type="ECO:0000269" key="4">
    <source>
    </source>
</evidence>
<evidence type="ECO:0000305" key="5"/>
<evidence type="ECO:0007744" key="6">
    <source>
    </source>
</evidence>
<proteinExistence type="evidence at protein level"/>
<gene>
    <name type="primary">FUS1</name>
    <name type="ordered locus">YCL027W</name>
    <name type="ORF">YCL27W</name>
</gene>
<protein>
    <recommendedName>
        <fullName>Nuclear fusion protein FUS1</fullName>
    </recommendedName>
</protein>
<reference key="1">
    <citation type="journal article" date="1987" name="Mol. Cell. Biol.">
        <title>Two genes required for cell fusion during yeast conjugation: evidence for a pheromone-induced surface protein.</title>
        <authorList>
            <person name="Trueheart J."/>
            <person name="Boeke J.D."/>
            <person name="Fink G.R."/>
        </authorList>
    </citation>
    <scope>NUCLEOTIDE SEQUENCE [GENOMIC DNA]</scope>
</reference>
<reference key="2">
    <citation type="journal article" date="1987" name="Mol. Cell. Biol.">
        <title>Identification and regulation of a gene required for cell fusion during mating of the yeast Saccharomyces cerevisiae.</title>
        <authorList>
            <person name="McCaffrey G."/>
            <person name="Clay F.J."/>
            <person name="Kelsay K."/>
            <person name="Sprague G.F. Jr."/>
        </authorList>
    </citation>
    <scope>NUCLEOTIDE SEQUENCE [GENOMIC DNA]</scope>
</reference>
<reference key="3">
    <citation type="journal article" date="1992" name="Nature">
        <title>The complete DNA sequence of yeast chromosome III.</title>
        <authorList>
            <person name="Oliver S.G."/>
            <person name="van der Aart Q.J.M."/>
            <person name="Agostoni-Carbone M.L."/>
            <person name="Aigle M."/>
            <person name="Alberghina L."/>
            <person name="Alexandraki D."/>
            <person name="Antoine G."/>
            <person name="Anwar R."/>
            <person name="Ballesta J.P.G."/>
            <person name="Benit P."/>
            <person name="Berben G."/>
            <person name="Bergantino E."/>
            <person name="Biteau N."/>
            <person name="Bolle P.-A."/>
            <person name="Bolotin-Fukuhara M."/>
            <person name="Brown A."/>
            <person name="Brown A.J.P."/>
            <person name="Buhler J.-M."/>
            <person name="Carcano C."/>
            <person name="Carignani G."/>
            <person name="Cederberg H."/>
            <person name="Chanet R."/>
            <person name="Contreras R."/>
            <person name="Crouzet M."/>
            <person name="Daignan-Fornier B."/>
            <person name="Defoor E."/>
            <person name="Delgado M.D."/>
            <person name="Demolder J."/>
            <person name="Doira C."/>
            <person name="Dubois E."/>
            <person name="Dujon B."/>
            <person name="Duesterhoeft A."/>
            <person name="Erdmann D."/>
            <person name="Esteban M."/>
            <person name="Fabre F."/>
            <person name="Fairhead C."/>
            <person name="Faye G."/>
            <person name="Feldmann H."/>
            <person name="Fiers W."/>
            <person name="Francingues-Gaillard M.-C."/>
            <person name="Franco L."/>
            <person name="Frontali L."/>
            <person name="Fukuhara H."/>
            <person name="Fuller L.J."/>
            <person name="Galland P."/>
            <person name="Gent M.E."/>
            <person name="Gigot D."/>
            <person name="Gilliquet V."/>
            <person name="Glansdorff N."/>
            <person name="Goffeau A."/>
            <person name="Grenson M."/>
            <person name="Grisanti P."/>
            <person name="Grivell L.A."/>
            <person name="de Haan M."/>
            <person name="Haasemann M."/>
            <person name="Hatat D."/>
            <person name="Hoenicka J."/>
            <person name="Hegemann J.H."/>
            <person name="Herbert C.J."/>
            <person name="Hilger F."/>
            <person name="Hohmann S."/>
            <person name="Hollenberg C.P."/>
            <person name="Huse K."/>
            <person name="Iborra F."/>
            <person name="Indge K.J."/>
            <person name="Isono K."/>
            <person name="Jacq C."/>
            <person name="Jacquet M."/>
            <person name="James C.M."/>
            <person name="Jauniaux J.-C."/>
            <person name="Jia Y."/>
            <person name="Jimenez A."/>
            <person name="Kelly A."/>
            <person name="Kleinhans U."/>
            <person name="Kreisl P."/>
            <person name="Lanfranchi G."/>
            <person name="Lewis C."/>
            <person name="van der Linden C.G."/>
            <person name="Lucchini G."/>
            <person name="Lutzenkirchen K."/>
            <person name="Maat M.J."/>
            <person name="Mallet L."/>
            <person name="Mannhaupt G."/>
            <person name="Martegani E."/>
            <person name="Mathieu A."/>
            <person name="Maurer C.T.C."/>
            <person name="McConnell D."/>
            <person name="McKee R.A."/>
            <person name="Messenguy F."/>
            <person name="Mewes H.-W."/>
            <person name="Molemans F."/>
            <person name="Montague M.A."/>
            <person name="Muzi Falconi M."/>
            <person name="Navas L."/>
            <person name="Newlon C.S."/>
            <person name="Noone D."/>
            <person name="Pallier C."/>
            <person name="Panzeri L."/>
            <person name="Pearson B.M."/>
            <person name="Perea J."/>
            <person name="Philippsen P."/>
            <person name="Pierard A."/>
            <person name="Planta R.J."/>
            <person name="Plevani P."/>
            <person name="Poetsch B."/>
            <person name="Pohl F.M."/>
            <person name="Purnelle B."/>
            <person name="Ramezani Rad M."/>
            <person name="Rasmussen S.W."/>
            <person name="Raynal A."/>
            <person name="Remacha M.A."/>
            <person name="Richterich P."/>
            <person name="Roberts A.B."/>
            <person name="Rodriguez F."/>
            <person name="Sanz E."/>
            <person name="Schaaff-Gerstenschlaeger I."/>
            <person name="Scherens B."/>
            <person name="Schweitzer B."/>
            <person name="Shu Y."/>
            <person name="Skala J."/>
            <person name="Slonimski P.P."/>
            <person name="Sor F."/>
            <person name="Soustelle C."/>
            <person name="Spiegelberg R."/>
            <person name="Stateva L.I."/>
            <person name="Steensma H.Y."/>
            <person name="Steiner S."/>
            <person name="Thierry A."/>
            <person name="Thireos G."/>
            <person name="Tzermia M."/>
            <person name="Urrestarazu L.A."/>
            <person name="Valle G."/>
            <person name="Vetter I."/>
            <person name="van Vliet-Reedijk J.C."/>
            <person name="Voet M."/>
            <person name="Volckaert G."/>
            <person name="Vreken P."/>
            <person name="Wang H."/>
            <person name="Warmington J.R."/>
            <person name="von Wettstein D."/>
            <person name="Wicksteed B.L."/>
            <person name="Wilson C."/>
            <person name="Wurst H."/>
            <person name="Xu G."/>
            <person name="Yoshikawa A."/>
            <person name="Zimmermann F.K."/>
            <person name="Sgouros J.G."/>
        </authorList>
    </citation>
    <scope>NUCLEOTIDE SEQUENCE [LARGE SCALE GENOMIC DNA]</scope>
    <source>
        <strain>ATCC 204508 / S288c</strain>
    </source>
</reference>
<reference key="4">
    <citation type="submission" date="2001-06" db="EMBL/GenBank/DDBJ databases">
        <authorList>
            <person name="Mewes H.-W."/>
        </authorList>
    </citation>
    <scope>SEQUENCE REVISION TO 130; 482 AND 485</scope>
</reference>
<reference key="5">
    <citation type="journal article" date="2014" name="G3 (Bethesda)">
        <title>The reference genome sequence of Saccharomyces cerevisiae: Then and now.</title>
        <authorList>
            <person name="Engel S.R."/>
            <person name="Dietrich F.S."/>
            <person name="Fisk D.G."/>
            <person name="Binkley G."/>
            <person name="Balakrishnan R."/>
            <person name="Costanzo M.C."/>
            <person name="Dwight S.S."/>
            <person name="Hitz B.C."/>
            <person name="Karra K."/>
            <person name="Nash R.S."/>
            <person name="Weng S."/>
            <person name="Wong E.D."/>
            <person name="Lloyd P."/>
            <person name="Skrzypek M.S."/>
            <person name="Miyasato S.R."/>
            <person name="Simison M."/>
            <person name="Cherry J.M."/>
        </authorList>
    </citation>
    <scope>GENOME REANNOTATION</scope>
    <source>
        <strain>ATCC 204508 / S288c</strain>
    </source>
</reference>
<reference key="6">
    <citation type="journal article" date="1989" name="Proc. Natl. Acad. Sci. U.S.A.">
        <title>The yeast cell fusion protein FUS1 is O-glycosylated and spans the plasma membrane.</title>
        <authorList>
            <person name="Trueheart J."/>
            <person name="Fink G.R."/>
        </authorList>
    </citation>
    <scope>GLYCOSYLATION</scope>
</reference>
<reference key="7">
    <citation type="journal article" date="2004" name="Genetics">
        <title>Fus1p interacts with components of the Hog1p mitogen-activated protein kinase and Cdc42p morphogenesis signaling pathways to control cell fusion during yeast mating.</title>
        <authorList>
            <person name="Nelson B."/>
            <person name="Parsons A.B."/>
            <person name="Evangelista M."/>
            <person name="Schaefer K."/>
            <person name="Kennedy K."/>
            <person name="Ritchie S."/>
            <person name="Petryshen T.L."/>
            <person name="Boone C."/>
        </authorList>
    </citation>
    <scope>FUNCTION</scope>
    <scope>INTERACTION WITH SHO1</scope>
</reference>
<reference key="8">
    <citation type="journal article" date="2007" name="J. Proteome Res.">
        <title>Large-scale phosphorylation analysis of alpha-factor-arrested Saccharomyces cerevisiae.</title>
        <authorList>
            <person name="Li X."/>
            <person name="Gerber S.A."/>
            <person name="Rudner A.D."/>
            <person name="Beausoleil S.A."/>
            <person name="Haas W."/>
            <person name="Villen J."/>
            <person name="Elias J.E."/>
            <person name="Gygi S.P."/>
        </authorList>
    </citation>
    <scope>PHOSPHORYLATION [LARGE SCALE ANALYSIS] AT THR-178; SER-190; SER-256; THR-281 AND THR-424</scope>
    <scope>IDENTIFICATION BY MASS SPECTROMETRY [LARGE SCALE ANALYSIS]</scope>
    <source>
        <strain>ADR376</strain>
    </source>
</reference>
<organism>
    <name type="scientific">Saccharomyces cerevisiae (strain ATCC 204508 / S288c)</name>
    <name type="common">Baker's yeast</name>
    <dbReference type="NCBI Taxonomy" id="559292"/>
    <lineage>
        <taxon>Eukaryota</taxon>
        <taxon>Fungi</taxon>
        <taxon>Dikarya</taxon>
        <taxon>Ascomycota</taxon>
        <taxon>Saccharomycotina</taxon>
        <taxon>Saccharomycetes</taxon>
        <taxon>Saccharomycetales</taxon>
        <taxon>Saccharomycetaceae</taxon>
        <taxon>Saccharomyces</taxon>
    </lineage>
</organism>
<dbReference type="EMBL" id="M17199">
    <property type="protein sequence ID" value="AAA34612.1"/>
    <property type="molecule type" value="Genomic_DNA"/>
</dbReference>
<dbReference type="EMBL" id="M16717">
    <property type="protein sequence ID" value="AAA34616.1"/>
    <property type="molecule type" value="Genomic_DNA"/>
</dbReference>
<dbReference type="EMBL" id="X59720">
    <property type="protein sequence ID" value="CAA42358.2"/>
    <property type="molecule type" value="Genomic_DNA"/>
</dbReference>
<dbReference type="EMBL" id="BK006937">
    <property type="protein sequence ID" value="DAA07457.1"/>
    <property type="molecule type" value="Genomic_DNA"/>
</dbReference>
<dbReference type="PIR" id="S19354">
    <property type="entry name" value="S19354"/>
</dbReference>
<dbReference type="RefSeq" id="NP_009903.2">
    <property type="nucleotide sequence ID" value="NM_001178672.1"/>
</dbReference>
<dbReference type="SMR" id="P11710"/>
<dbReference type="BioGRID" id="30956">
    <property type="interactions" value="89"/>
</dbReference>
<dbReference type="DIP" id="DIP-670N"/>
<dbReference type="FunCoup" id="P11710">
    <property type="interactions" value="285"/>
</dbReference>
<dbReference type="IntAct" id="P11710">
    <property type="interactions" value="49"/>
</dbReference>
<dbReference type="MINT" id="P11710"/>
<dbReference type="STRING" id="4932.YCL027W"/>
<dbReference type="GlyGen" id="P11710">
    <property type="glycosylation" value="4 sites, 1 O-linked glycan (3 sites)"/>
</dbReference>
<dbReference type="iPTMnet" id="P11710"/>
<dbReference type="PaxDb" id="4932-YCL027W"/>
<dbReference type="PeptideAtlas" id="P11710"/>
<dbReference type="EnsemblFungi" id="YCL027W_mRNA">
    <property type="protein sequence ID" value="YCL027W"/>
    <property type="gene ID" value="YCL027W"/>
</dbReference>
<dbReference type="GeneID" id="850330"/>
<dbReference type="KEGG" id="sce:YCL027W"/>
<dbReference type="AGR" id="SGD:S000000532"/>
<dbReference type="SGD" id="S000000532">
    <property type="gene designation" value="FUS1"/>
</dbReference>
<dbReference type="VEuPathDB" id="FungiDB:YCL027W"/>
<dbReference type="eggNOG" id="ENOG502QVI6">
    <property type="taxonomic scope" value="Eukaryota"/>
</dbReference>
<dbReference type="HOGENOM" id="CLU_040701_0_0_1"/>
<dbReference type="InParanoid" id="P11710"/>
<dbReference type="OMA" id="HTDGWCL"/>
<dbReference type="OrthoDB" id="5340910at2759"/>
<dbReference type="BioCyc" id="YEAST:G3O-29288-MONOMER"/>
<dbReference type="BioGRID-ORCS" id="850330">
    <property type="hits" value="4 hits in 10 CRISPR screens"/>
</dbReference>
<dbReference type="PRO" id="PR:P11710"/>
<dbReference type="Proteomes" id="UP000002311">
    <property type="component" value="Chromosome III"/>
</dbReference>
<dbReference type="RNAct" id="P11710">
    <property type="molecule type" value="protein"/>
</dbReference>
<dbReference type="GO" id="GO:0005938">
    <property type="term" value="C:cell cortex"/>
    <property type="evidence" value="ECO:0007669"/>
    <property type="project" value="GOC"/>
</dbReference>
<dbReference type="GO" id="GO:0005783">
    <property type="term" value="C:endoplasmic reticulum"/>
    <property type="evidence" value="ECO:0007005"/>
    <property type="project" value="SGD"/>
</dbReference>
<dbReference type="GO" id="GO:0043332">
    <property type="term" value="C:mating projection tip"/>
    <property type="evidence" value="ECO:0000314"/>
    <property type="project" value="SGD"/>
</dbReference>
<dbReference type="GO" id="GO:0005886">
    <property type="term" value="C:plasma membrane"/>
    <property type="evidence" value="ECO:0000314"/>
    <property type="project" value="SGD"/>
</dbReference>
<dbReference type="GO" id="GO:0000755">
    <property type="term" value="P:cytogamy"/>
    <property type="evidence" value="ECO:0000315"/>
    <property type="project" value="SGD"/>
</dbReference>
<dbReference type="GO" id="GO:0032065">
    <property type="term" value="P:maintenance of protein location in cell cortex"/>
    <property type="evidence" value="ECO:0000315"/>
    <property type="project" value="SGD"/>
</dbReference>
<dbReference type="CDD" id="cd11854">
    <property type="entry name" value="SH3_Fus1p"/>
    <property type="match status" value="1"/>
</dbReference>
<dbReference type="Gene3D" id="2.30.30.40">
    <property type="entry name" value="SH3 Domains"/>
    <property type="match status" value="1"/>
</dbReference>
<dbReference type="InterPro" id="IPR035521">
    <property type="entry name" value="Fus1_SH3"/>
</dbReference>
<dbReference type="InterPro" id="IPR036028">
    <property type="entry name" value="SH3-like_dom_sf"/>
</dbReference>
<dbReference type="InterPro" id="IPR001452">
    <property type="entry name" value="SH3_domain"/>
</dbReference>
<dbReference type="Pfam" id="PF00018">
    <property type="entry name" value="SH3_1"/>
    <property type="match status" value="1"/>
</dbReference>
<dbReference type="SMART" id="SM00326">
    <property type="entry name" value="SH3"/>
    <property type="match status" value="1"/>
</dbReference>
<dbReference type="SUPFAM" id="SSF50044">
    <property type="entry name" value="SH3-domain"/>
    <property type="match status" value="1"/>
</dbReference>
<dbReference type="PROSITE" id="PS50002">
    <property type="entry name" value="SH3"/>
    <property type="match status" value="1"/>
</dbReference>
<name>FUS1_YEAST</name>
<comment type="function">
    <text evidence="3">Required for cell fusion. Negatively regulates Sho1p signaling to ensure efficient cell fusion.</text>
</comment>
<comment type="function">
    <text evidence="3">Interacts with SHO1.</text>
</comment>
<comment type="interaction">
    <interactant intactId="EBI-7179">
        <id>P11710</id>
    </interactant>
    <interactant intactId="EBI-3711">
        <id>P40450</id>
        <label>BNR1</label>
    </interactant>
    <organismsDiffer>false</organismsDiffer>
    <experiments>5</experiments>
</comment>
<comment type="interaction">
    <interactant intactId="EBI-7179">
        <id>P11710</id>
    </interactant>
    <interactant intactId="EBI-8118">
        <id>Q12753</id>
        <label>HAA1</label>
    </interactant>
    <organismsDiffer>false</organismsDiffer>
    <experiments>3</experiments>
</comment>
<comment type="interaction">
    <interactant intactId="EBI-7179">
        <id>P11710</id>
    </interactant>
    <interactant intactId="EBI-13106">
        <id>P40091</id>
        <label>PEA2</label>
    </interactant>
    <organismsDiffer>false</organismsDiffer>
    <experiments>5</experiments>
</comment>
<comment type="interaction">
    <interactant intactId="EBI-7179">
        <id>P11710</id>
    </interactant>
    <interactant intactId="EBI-18140">
        <id>P40073</id>
        <label>SHO1</label>
    </interactant>
    <organismsDiffer>false</organismsDiffer>
    <experiments>7</experiments>
</comment>
<comment type="interaction">
    <interactant intactId="EBI-7179">
        <id>P11710</id>
    </interactant>
    <interactant intactId="EBI-18373">
        <id>P32917</id>
        <label>STE5</label>
    </interactant>
    <organismsDiffer>false</organismsDiffer>
    <experiments>2</experiments>
</comment>
<comment type="subcellular location">
    <subcellularLocation>
        <location evidence="5">Membrane</location>
        <topology evidence="5">Single-pass membrane protein</topology>
    </subcellularLocation>
</comment>
<comment type="induction">
    <text>FUS1 remains essentially unexpressed in vegetative cells, but is strongly induced by incubation of haploid cells with the appropriate mating pheromone.</text>
</comment>
<comment type="PTM">
    <text evidence="4">O-glycosylated.</text>
</comment>